<feature type="chain" id="PRO_0000215810" description="Nucleolar GTP-binding protein 2">
    <location>
        <begin position="1"/>
        <end position="731"/>
    </location>
</feature>
<feature type="domain" description="CP-type G" evidence="3">
    <location>
        <begin position="223"/>
        <end position="396"/>
    </location>
</feature>
<feature type="region of interest" description="Disordered" evidence="4">
    <location>
        <begin position="1"/>
        <end position="27"/>
    </location>
</feature>
<feature type="region of interest" description="Disordered" evidence="4">
    <location>
        <begin position="130"/>
        <end position="162"/>
    </location>
</feature>
<feature type="region of interest" description="Disordered" evidence="4">
    <location>
        <begin position="517"/>
        <end position="541"/>
    </location>
</feature>
<feature type="region of interest" description="Disordered" evidence="4">
    <location>
        <begin position="585"/>
        <end position="731"/>
    </location>
</feature>
<feature type="compositionally biased region" description="Basic and acidic residues" evidence="4">
    <location>
        <begin position="132"/>
        <end position="145"/>
    </location>
</feature>
<feature type="compositionally biased region" description="Basic and acidic residues" evidence="4">
    <location>
        <begin position="519"/>
        <end position="541"/>
    </location>
</feature>
<feature type="compositionally biased region" description="Acidic residues" evidence="4">
    <location>
        <begin position="597"/>
        <end position="655"/>
    </location>
</feature>
<feature type="compositionally biased region" description="Polar residues" evidence="4">
    <location>
        <begin position="685"/>
        <end position="698"/>
    </location>
</feature>
<feature type="compositionally biased region" description="Basic residues" evidence="4">
    <location>
        <begin position="699"/>
        <end position="715"/>
    </location>
</feature>
<feature type="binding site" evidence="2">
    <location>
        <begin position="345"/>
        <end position="352"/>
    </location>
    <ligand>
        <name>GTP</name>
        <dbReference type="ChEBI" id="CHEBI:37565"/>
    </ligand>
</feature>
<feature type="binding site" evidence="2">
    <location>
        <begin position="389"/>
        <end position="393"/>
    </location>
    <ligand>
        <name>GTP</name>
        <dbReference type="ChEBI" id="CHEBI:37565"/>
    </ligand>
</feature>
<reference key="1">
    <citation type="journal article" date="2005" name="Biochem. Biophys. Res. Commun.">
        <title>Genomic organization and expression of 23 new genes from MATalpha locus of Cryptococcus neoformans var. gattii.</title>
        <authorList>
            <person name="Ren P."/>
            <person name="Roncaglia P."/>
            <person name="Springer D.J."/>
            <person name="Fan J."/>
            <person name="Chaturvedi V."/>
        </authorList>
    </citation>
    <scope>NUCLEOTIDE SEQUENCE [GENOMIC DNA]</scope>
    <source>
        <strain>ATCC 32609 / CBS 6956 / NIH 444 / Serotype B</strain>
    </source>
</reference>
<organism>
    <name type="scientific">Cryptococcus gattii</name>
    <name type="common">Filobasidiella gattii</name>
    <name type="synonym">Cryptococcus bacillisporus</name>
    <dbReference type="NCBI Taxonomy" id="552467"/>
    <lineage>
        <taxon>Eukaryota</taxon>
        <taxon>Fungi</taxon>
        <taxon>Dikarya</taxon>
        <taxon>Basidiomycota</taxon>
        <taxon>Agaricomycotina</taxon>
        <taxon>Tremellomycetes</taxon>
        <taxon>Tremellales</taxon>
        <taxon>Cryptococcaceae</taxon>
        <taxon>Cryptococcus</taxon>
        <taxon>Cryptococcus gattii species complex</taxon>
    </lineage>
</organism>
<name>NOG2_CRYGA</name>
<dbReference type="EMBL" id="AY421966">
    <property type="protein sequence ID" value="AAS92523.1"/>
    <property type="molecule type" value="Genomic_DNA"/>
</dbReference>
<dbReference type="SMR" id="Q6TGJ8"/>
<dbReference type="VEuPathDB" id="FungiDB:CGB_I1220W"/>
<dbReference type="VEuPathDB" id="FungiDB:CNBG_5856"/>
<dbReference type="VEuPathDB" id="FungiDB:I306_06620"/>
<dbReference type="VEuPathDB" id="FungiDB:I308_03660"/>
<dbReference type="VEuPathDB" id="FungiDB:I311_03673"/>
<dbReference type="VEuPathDB" id="FungiDB:I314_03638"/>
<dbReference type="GO" id="GO:0005730">
    <property type="term" value="C:nucleolus"/>
    <property type="evidence" value="ECO:0007669"/>
    <property type="project" value="UniProtKB-SubCell"/>
</dbReference>
<dbReference type="GO" id="GO:0005525">
    <property type="term" value="F:GTP binding"/>
    <property type="evidence" value="ECO:0007669"/>
    <property type="project" value="UniProtKB-KW"/>
</dbReference>
<dbReference type="GO" id="GO:0042254">
    <property type="term" value="P:ribosome biogenesis"/>
    <property type="evidence" value="ECO:0007669"/>
    <property type="project" value="UniProtKB-KW"/>
</dbReference>
<dbReference type="CDD" id="cd01858">
    <property type="entry name" value="NGP_1"/>
    <property type="match status" value="1"/>
</dbReference>
<dbReference type="FunFam" id="3.40.50.300:FF:000559">
    <property type="entry name" value="Nuclear/nucleolar GTPase 2"/>
    <property type="match status" value="1"/>
</dbReference>
<dbReference type="FunFam" id="1.10.1580.10:FF:000001">
    <property type="entry name" value="Nucleolar GTP-binding protein 2"/>
    <property type="match status" value="1"/>
</dbReference>
<dbReference type="Gene3D" id="1.10.1580.10">
    <property type="match status" value="1"/>
</dbReference>
<dbReference type="Gene3D" id="3.40.50.300">
    <property type="entry name" value="P-loop containing nucleotide triphosphate hydrolases"/>
    <property type="match status" value="1"/>
</dbReference>
<dbReference type="InterPro" id="IPR030378">
    <property type="entry name" value="G_CP_dom"/>
</dbReference>
<dbReference type="InterPro" id="IPR024929">
    <property type="entry name" value="GNL2_CP_dom"/>
</dbReference>
<dbReference type="InterPro" id="IPR006073">
    <property type="entry name" value="GTP-bd"/>
</dbReference>
<dbReference type="InterPro" id="IPR023179">
    <property type="entry name" value="GTP-bd_ortho_bundle_sf"/>
</dbReference>
<dbReference type="InterPro" id="IPR012971">
    <property type="entry name" value="NOG2_N_dom"/>
</dbReference>
<dbReference type="InterPro" id="IPR027417">
    <property type="entry name" value="P-loop_NTPase"/>
</dbReference>
<dbReference type="InterPro" id="IPR050755">
    <property type="entry name" value="TRAFAC_YlqF/YawG_RiboMat"/>
</dbReference>
<dbReference type="PANTHER" id="PTHR11089">
    <property type="entry name" value="GTP-BINDING PROTEIN-RELATED"/>
    <property type="match status" value="1"/>
</dbReference>
<dbReference type="PANTHER" id="PTHR11089:SF9">
    <property type="entry name" value="NUCLEOLAR GTP-BINDING PROTEIN 2"/>
    <property type="match status" value="1"/>
</dbReference>
<dbReference type="Pfam" id="PF01926">
    <property type="entry name" value="MMR_HSR1"/>
    <property type="match status" value="1"/>
</dbReference>
<dbReference type="Pfam" id="PF08153">
    <property type="entry name" value="NGP1NT"/>
    <property type="match status" value="1"/>
</dbReference>
<dbReference type="PRINTS" id="PR00326">
    <property type="entry name" value="GTP1OBG"/>
</dbReference>
<dbReference type="SUPFAM" id="SSF52540">
    <property type="entry name" value="P-loop containing nucleoside triphosphate hydrolases"/>
    <property type="match status" value="1"/>
</dbReference>
<dbReference type="PROSITE" id="PS51721">
    <property type="entry name" value="G_CP"/>
    <property type="match status" value="1"/>
</dbReference>
<accession>Q6TGJ8</accession>
<protein>
    <recommendedName>
        <fullName>Nucleolar GTP-binding protein 2</fullName>
    </recommendedName>
</protein>
<sequence length="731" mass="81231">MGKGKNHDRKANPGFGKVKSKSGTSTGEFTLKRVKGENFYRDAKSAARVKMLNGGKAVRDRDGKIVEAAAFQKGEKEAEPGRVKPDRRWFGNTRVISQSALDHFRTALKEQKADPYSVLLKRNKLPMGLLQDDTKDSGSRPHIVETEPFGDTFGPKAQRKRPRLDIGSIEELGESSAAAATAAEAATAESQANGTADLADIYHPTTSTAREPIYAKGTSRRIWGELYKVLDSSDVVIHVLDARDPLGTRCKPVVEYLRKEKAHKHLVYVLNKVDLVPTWVTSGPYAYAYANGPARWVKHLSLSAPTIAFHASINNSFGKGSLIQLLRQFSVLHSDKKQISVGFIGYPNTGKSSIINTLKKKKVCTVAPIPGETKVWQYITLMRRIYLIDCPGIVPVSAKDSDTDTVLKGVVRVENLATPAEHIPALLERVRPEYLERTYNLEHVEGGWHGEQGATVILTAIAKKSGKLLKGGEPDQEAAAKMVLNDWIRGKIPFFVAPPAKSEPGAPTAATAAAATTTEAEKKKTEAEEQELAEERETMEILEEQERSLGKVLGIKRVKGVEQPISKIVTMTKFIGDDARRYVEEEEVVDQDKEMVEKEEEEEEEEDEDEDEEEEELAWEDVFPEEADAVDGGEEVEESDKEETDDEEDVDEEEAVPSAKQLGKRKAIDSDEEEQTANKSKRMTTNKQKATNFYTHANVKNRNRDRKVPKNPGKRSRGDDETTGKKAKKRR</sequence>
<keyword id="KW-0342">GTP-binding</keyword>
<keyword id="KW-0547">Nucleotide-binding</keyword>
<keyword id="KW-0539">Nucleus</keyword>
<keyword id="KW-0690">Ribosome biogenesis</keyword>
<comment type="function">
    <text evidence="1">GTPase that associates with pre-60S ribosomal subunits in the nucleolus and is required for their nuclear export and maturation.</text>
</comment>
<comment type="subcellular location">
    <subcellularLocation>
        <location evidence="1">Nucleus</location>
        <location evidence="1">Nucleolus</location>
    </subcellularLocation>
</comment>
<comment type="similarity">
    <text evidence="3">Belongs to the TRAFAC class YlqF/YawG GTPase family. NOG2 subfamily.</text>
</comment>
<proteinExistence type="inferred from homology"/>
<evidence type="ECO:0000250" key="1"/>
<evidence type="ECO:0000255" key="2"/>
<evidence type="ECO:0000255" key="3">
    <source>
        <dbReference type="PROSITE-ProRule" id="PRU01058"/>
    </source>
</evidence>
<evidence type="ECO:0000256" key="4">
    <source>
        <dbReference type="SAM" id="MobiDB-lite"/>
    </source>
</evidence>
<gene>
    <name type="primary">NOG2</name>
</gene>